<evidence type="ECO:0000255" key="1">
    <source>
        <dbReference type="HAMAP-Rule" id="MF_00303"/>
    </source>
</evidence>
<keyword id="KW-0131">Cell cycle</keyword>
<keyword id="KW-0132">Cell division</keyword>
<keyword id="KW-0143">Chaperone</keyword>
<keyword id="KW-0963">Cytoplasm</keyword>
<keyword id="KW-0413">Isomerase</keyword>
<keyword id="KW-1185">Reference proteome</keyword>
<keyword id="KW-0697">Rotamase</keyword>
<reference key="1">
    <citation type="journal article" date="2006" name="Proc. Natl. Acad. Sci. U.S.A.">
        <title>Burkholderia xenovorans LB400 harbors a multi-replicon, 9.73-Mbp genome shaped for versatility.</title>
        <authorList>
            <person name="Chain P.S.G."/>
            <person name="Denef V.J."/>
            <person name="Konstantinidis K.T."/>
            <person name="Vergez L.M."/>
            <person name="Agullo L."/>
            <person name="Reyes V.L."/>
            <person name="Hauser L."/>
            <person name="Cordova M."/>
            <person name="Gomez L."/>
            <person name="Gonzalez M."/>
            <person name="Land M."/>
            <person name="Lao V."/>
            <person name="Larimer F."/>
            <person name="LiPuma J.J."/>
            <person name="Mahenthiralingam E."/>
            <person name="Malfatti S.A."/>
            <person name="Marx C.J."/>
            <person name="Parnell J.J."/>
            <person name="Ramette A."/>
            <person name="Richardson P."/>
            <person name="Seeger M."/>
            <person name="Smith D."/>
            <person name="Spilker T."/>
            <person name="Sul W.J."/>
            <person name="Tsoi T.V."/>
            <person name="Ulrich L.E."/>
            <person name="Zhulin I.B."/>
            <person name="Tiedje J.M."/>
        </authorList>
    </citation>
    <scope>NUCLEOTIDE SEQUENCE [LARGE SCALE GENOMIC DNA]</scope>
    <source>
        <strain>LB400</strain>
    </source>
</reference>
<comment type="function">
    <text evidence="1">Involved in protein export. Acts as a chaperone by maintaining the newly synthesized protein in an open conformation. Functions as a peptidyl-prolyl cis-trans isomerase.</text>
</comment>
<comment type="catalytic activity">
    <reaction evidence="1">
        <text>[protein]-peptidylproline (omega=180) = [protein]-peptidylproline (omega=0)</text>
        <dbReference type="Rhea" id="RHEA:16237"/>
        <dbReference type="Rhea" id="RHEA-COMP:10747"/>
        <dbReference type="Rhea" id="RHEA-COMP:10748"/>
        <dbReference type="ChEBI" id="CHEBI:83833"/>
        <dbReference type="ChEBI" id="CHEBI:83834"/>
        <dbReference type="EC" id="5.2.1.8"/>
    </reaction>
</comment>
<comment type="subcellular location">
    <subcellularLocation>
        <location>Cytoplasm</location>
    </subcellularLocation>
    <text evidence="1">About half TF is bound to the ribosome near the polypeptide exit tunnel while the other half is free in the cytoplasm.</text>
</comment>
<comment type="domain">
    <text evidence="1">Consists of 3 domains; the N-terminus binds the ribosome, the middle domain has PPIase activity, while the C-terminus has intrinsic chaperone activity on its own.</text>
</comment>
<comment type="similarity">
    <text evidence="1">Belongs to the FKBP-type PPIase family. Tig subfamily.</text>
</comment>
<feature type="chain" id="PRO_0000256538" description="Trigger factor">
    <location>
        <begin position="1"/>
        <end position="448"/>
    </location>
</feature>
<feature type="domain" description="PPIase FKBP-type" evidence="1">
    <location>
        <begin position="172"/>
        <end position="257"/>
    </location>
</feature>
<accession>Q13Z16</accession>
<dbReference type="EC" id="5.2.1.8" evidence="1"/>
<dbReference type="EMBL" id="CP000270">
    <property type="protein sequence ID" value="ABE30673.1"/>
    <property type="molecule type" value="Genomic_DNA"/>
</dbReference>
<dbReference type="RefSeq" id="WP_011488301.1">
    <property type="nucleotide sequence ID" value="NC_007951.1"/>
</dbReference>
<dbReference type="SMR" id="Q13Z16"/>
<dbReference type="STRING" id="266265.Bxe_A2296"/>
<dbReference type="KEGG" id="bxb:DR64_4447"/>
<dbReference type="KEGG" id="bxe:Bxe_A2296"/>
<dbReference type="PATRIC" id="fig|266265.5.peg.2235"/>
<dbReference type="eggNOG" id="COG0544">
    <property type="taxonomic scope" value="Bacteria"/>
</dbReference>
<dbReference type="OrthoDB" id="9767721at2"/>
<dbReference type="Proteomes" id="UP000001817">
    <property type="component" value="Chromosome 1"/>
</dbReference>
<dbReference type="GO" id="GO:0005737">
    <property type="term" value="C:cytoplasm"/>
    <property type="evidence" value="ECO:0007669"/>
    <property type="project" value="UniProtKB-SubCell"/>
</dbReference>
<dbReference type="GO" id="GO:0003755">
    <property type="term" value="F:peptidyl-prolyl cis-trans isomerase activity"/>
    <property type="evidence" value="ECO:0007669"/>
    <property type="project" value="UniProtKB-UniRule"/>
</dbReference>
<dbReference type="GO" id="GO:0044183">
    <property type="term" value="F:protein folding chaperone"/>
    <property type="evidence" value="ECO:0007669"/>
    <property type="project" value="TreeGrafter"/>
</dbReference>
<dbReference type="GO" id="GO:0043022">
    <property type="term" value="F:ribosome binding"/>
    <property type="evidence" value="ECO:0007669"/>
    <property type="project" value="TreeGrafter"/>
</dbReference>
<dbReference type="GO" id="GO:0051083">
    <property type="term" value="P:'de novo' cotranslational protein folding"/>
    <property type="evidence" value="ECO:0007669"/>
    <property type="project" value="TreeGrafter"/>
</dbReference>
<dbReference type="GO" id="GO:0051301">
    <property type="term" value="P:cell division"/>
    <property type="evidence" value="ECO:0007669"/>
    <property type="project" value="UniProtKB-KW"/>
</dbReference>
<dbReference type="GO" id="GO:0061077">
    <property type="term" value="P:chaperone-mediated protein folding"/>
    <property type="evidence" value="ECO:0007669"/>
    <property type="project" value="TreeGrafter"/>
</dbReference>
<dbReference type="GO" id="GO:0015031">
    <property type="term" value="P:protein transport"/>
    <property type="evidence" value="ECO:0007669"/>
    <property type="project" value="UniProtKB-UniRule"/>
</dbReference>
<dbReference type="GO" id="GO:0043335">
    <property type="term" value="P:protein unfolding"/>
    <property type="evidence" value="ECO:0007669"/>
    <property type="project" value="TreeGrafter"/>
</dbReference>
<dbReference type="FunFam" id="3.10.50.40:FF:000001">
    <property type="entry name" value="Trigger factor"/>
    <property type="match status" value="1"/>
</dbReference>
<dbReference type="Gene3D" id="3.10.50.40">
    <property type="match status" value="1"/>
</dbReference>
<dbReference type="Gene3D" id="3.30.70.1050">
    <property type="entry name" value="Trigger factor ribosome-binding domain"/>
    <property type="match status" value="1"/>
</dbReference>
<dbReference type="Gene3D" id="1.10.3120.10">
    <property type="entry name" value="Trigger factor, C-terminal domain"/>
    <property type="match status" value="1"/>
</dbReference>
<dbReference type="HAMAP" id="MF_00303">
    <property type="entry name" value="Trigger_factor_Tig"/>
    <property type="match status" value="1"/>
</dbReference>
<dbReference type="InterPro" id="IPR046357">
    <property type="entry name" value="PPIase_dom_sf"/>
</dbReference>
<dbReference type="InterPro" id="IPR001179">
    <property type="entry name" value="PPIase_FKBP_dom"/>
</dbReference>
<dbReference type="InterPro" id="IPR005215">
    <property type="entry name" value="Trig_fac"/>
</dbReference>
<dbReference type="InterPro" id="IPR008880">
    <property type="entry name" value="Trigger_fac_C"/>
</dbReference>
<dbReference type="InterPro" id="IPR037041">
    <property type="entry name" value="Trigger_fac_C_sf"/>
</dbReference>
<dbReference type="InterPro" id="IPR008881">
    <property type="entry name" value="Trigger_fac_ribosome-bd_bac"/>
</dbReference>
<dbReference type="InterPro" id="IPR036611">
    <property type="entry name" value="Trigger_fac_ribosome-bd_sf"/>
</dbReference>
<dbReference type="InterPro" id="IPR027304">
    <property type="entry name" value="Trigger_fact/SurA_dom_sf"/>
</dbReference>
<dbReference type="NCBIfam" id="TIGR00115">
    <property type="entry name" value="tig"/>
    <property type="match status" value="1"/>
</dbReference>
<dbReference type="PANTHER" id="PTHR30560">
    <property type="entry name" value="TRIGGER FACTOR CHAPERONE AND PEPTIDYL-PROLYL CIS/TRANS ISOMERASE"/>
    <property type="match status" value="1"/>
</dbReference>
<dbReference type="PANTHER" id="PTHR30560:SF3">
    <property type="entry name" value="TRIGGER FACTOR-LIKE PROTEIN TIG, CHLOROPLASTIC"/>
    <property type="match status" value="1"/>
</dbReference>
<dbReference type="Pfam" id="PF00254">
    <property type="entry name" value="FKBP_C"/>
    <property type="match status" value="1"/>
</dbReference>
<dbReference type="Pfam" id="PF05698">
    <property type="entry name" value="Trigger_C"/>
    <property type="match status" value="1"/>
</dbReference>
<dbReference type="Pfam" id="PF05697">
    <property type="entry name" value="Trigger_N"/>
    <property type="match status" value="1"/>
</dbReference>
<dbReference type="PIRSF" id="PIRSF003095">
    <property type="entry name" value="Trigger_factor"/>
    <property type="match status" value="1"/>
</dbReference>
<dbReference type="SUPFAM" id="SSF54534">
    <property type="entry name" value="FKBP-like"/>
    <property type="match status" value="1"/>
</dbReference>
<dbReference type="SUPFAM" id="SSF109998">
    <property type="entry name" value="Triger factor/SurA peptide-binding domain-like"/>
    <property type="match status" value="1"/>
</dbReference>
<dbReference type="SUPFAM" id="SSF102735">
    <property type="entry name" value="Trigger factor ribosome-binding domain"/>
    <property type="match status" value="1"/>
</dbReference>
<dbReference type="PROSITE" id="PS50059">
    <property type="entry name" value="FKBP_PPIASE"/>
    <property type="match status" value="1"/>
</dbReference>
<organism>
    <name type="scientific">Paraburkholderia xenovorans (strain LB400)</name>
    <dbReference type="NCBI Taxonomy" id="266265"/>
    <lineage>
        <taxon>Bacteria</taxon>
        <taxon>Pseudomonadati</taxon>
        <taxon>Pseudomonadota</taxon>
        <taxon>Betaproteobacteria</taxon>
        <taxon>Burkholderiales</taxon>
        <taxon>Burkholderiaceae</taxon>
        <taxon>Paraburkholderia</taxon>
    </lineage>
</organism>
<proteinExistence type="inferred from homology"/>
<gene>
    <name evidence="1" type="primary">tig</name>
    <name type="ordered locus">Bxeno_A2135</name>
    <name type="ORF">Bxe_A2296</name>
</gene>
<name>TIG_PARXL</name>
<protein>
    <recommendedName>
        <fullName evidence="1">Trigger factor</fullName>
        <shortName evidence="1">TF</shortName>
        <ecNumber evidence="1">5.2.1.8</ecNumber>
    </recommendedName>
    <alternativeName>
        <fullName evidence="1">PPIase</fullName>
    </alternativeName>
</protein>
<sequence length="448" mass="49879">MANVVENLGKLERRVTISLPKDAVQKEVDSRIRQLAKNVRMPGFRPGKVPLKMVTQQYSGQVEAEVLSDKVGKEFFDISRAENLRVAGQPSFAPKTDATEGDYAFDATFEVYPEVKLGDVATAEIERTTTTISEAEIDRTLDILRKQRVHFHARGEAGEHGDGGGDTAAKEGDRVTVDFVGKIEGEVFQGGSADDFAFVLGEGRMLPEFEKAATGLKVGESKEFDLAFPEDYHGKEVAGKTAQFTITMKKIEWPHLPEIDAEFAKSLGIEDGDLTKMRAEIKDNLEREAKRRTQAIVKNQVMDALLKISELDVPNALIEQDQERLVAMARQDLEQRGVPNAKDAPIPAAMFKEQAERRVKLGLVLAELVKANELQAKPEQIRAEVDEFAKSYEDPKEVVRWYYSNQQRLAEMEAYVVEANVVEFVLSKAKVTDKEVSFEELASATAQA</sequence>